<name>SYC_PSEPK</name>
<accession>Q88IU4</accession>
<protein>
    <recommendedName>
        <fullName evidence="1">Cysteine--tRNA ligase</fullName>
        <ecNumber evidence="1">6.1.1.16</ecNumber>
    </recommendedName>
    <alternativeName>
        <fullName evidence="1">Cysteinyl-tRNA synthetase</fullName>
        <shortName evidence="1">CysRS</shortName>
    </alternativeName>
</protein>
<feature type="chain" id="PRO_0000159461" description="Cysteine--tRNA ligase">
    <location>
        <begin position="1"/>
        <end position="460"/>
    </location>
</feature>
<feature type="short sequence motif" description="'HIGH' region">
    <location>
        <begin position="30"/>
        <end position="40"/>
    </location>
</feature>
<feature type="short sequence motif" description="'KMSKS' region">
    <location>
        <begin position="266"/>
        <end position="270"/>
    </location>
</feature>
<feature type="binding site" evidence="1">
    <location>
        <position position="28"/>
    </location>
    <ligand>
        <name>Zn(2+)</name>
        <dbReference type="ChEBI" id="CHEBI:29105"/>
    </ligand>
</feature>
<feature type="binding site" evidence="1">
    <location>
        <position position="209"/>
    </location>
    <ligand>
        <name>Zn(2+)</name>
        <dbReference type="ChEBI" id="CHEBI:29105"/>
    </ligand>
</feature>
<feature type="binding site" evidence="1">
    <location>
        <position position="234"/>
    </location>
    <ligand>
        <name>Zn(2+)</name>
        <dbReference type="ChEBI" id="CHEBI:29105"/>
    </ligand>
</feature>
<feature type="binding site" evidence="1">
    <location>
        <position position="238"/>
    </location>
    <ligand>
        <name>Zn(2+)</name>
        <dbReference type="ChEBI" id="CHEBI:29105"/>
    </ligand>
</feature>
<feature type="binding site" evidence="1">
    <location>
        <position position="269"/>
    </location>
    <ligand>
        <name>ATP</name>
        <dbReference type="ChEBI" id="CHEBI:30616"/>
    </ligand>
</feature>
<reference key="1">
    <citation type="journal article" date="2002" name="Environ. Microbiol.">
        <title>Complete genome sequence and comparative analysis of the metabolically versatile Pseudomonas putida KT2440.</title>
        <authorList>
            <person name="Nelson K.E."/>
            <person name="Weinel C."/>
            <person name="Paulsen I.T."/>
            <person name="Dodson R.J."/>
            <person name="Hilbert H."/>
            <person name="Martins dos Santos V.A.P."/>
            <person name="Fouts D.E."/>
            <person name="Gill S.R."/>
            <person name="Pop M."/>
            <person name="Holmes M."/>
            <person name="Brinkac L.M."/>
            <person name="Beanan M.J."/>
            <person name="DeBoy R.T."/>
            <person name="Daugherty S.C."/>
            <person name="Kolonay J.F."/>
            <person name="Madupu R."/>
            <person name="Nelson W.C."/>
            <person name="White O."/>
            <person name="Peterson J.D."/>
            <person name="Khouri H.M."/>
            <person name="Hance I."/>
            <person name="Chris Lee P."/>
            <person name="Holtzapple E.K."/>
            <person name="Scanlan D."/>
            <person name="Tran K."/>
            <person name="Moazzez A."/>
            <person name="Utterback T.R."/>
            <person name="Rizzo M."/>
            <person name="Lee K."/>
            <person name="Kosack D."/>
            <person name="Moestl D."/>
            <person name="Wedler H."/>
            <person name="Lauber J."/>
            <person name="Stjepandic D."/>
            <person name="Hoheisel J."/>
            <person name="Straetz M."/>
            <person name="Heim S."/>
            <person name="Kiewitz C."/>
            <person name="Eisen J.A."/>
            <person name="Timmis K.N."/>
            <person name="Duesterhoeft A."/>
            <person name="Tuemmler B."/>
            <person name="Fraser C.M."/>
        </authorList>
    </citation>
    <scope>NUCLEOTIDE SEQUENCE [LARGE SCALE GENOMIC DNA]</scope>
    <source>
        <strain>ATCC 47054 / DSM 6125 / CFBP 8728 / NCIMB 11950 / KT2440</strain>
    </source>
</reference>
<proteinExistence type="inferred from homology"/>
<gene>
    <name evidence="1" type="primary">cysS</name>
    <name type="ordered locus">PP_2905</name>
</gene>
<evidence type="ECO:0000255" key="1">
    <source>
        <dbReference type="HAMAP-Rule" id="MF_00041"/>
    </source>
</evidence>
<keyword id="KW-0030">Aminoacyl-tRNA synthetase</keyword>
<keyword id="KW-0067">ATP-binding</keyword>
<keyword id="KW-0963">Cytoplasm</keyword>
<keyword id="KW-0436">Ligase</keyword>
<keyword id="KW-0479">Metal-binding</keyword>
<keyword id="KW-0547">Nucleotide-binding</keyword>
<keyword id="KW-0648">Protein biosynthesis</keyword>
<keyword id="KW-1185">Reference proteome</keyword>
<keyword id="KW-0862">Zinc</keyword>
<comment type="catalytic activity">
    <reaction evidence="1">
        <text>tRNA(Cys) + L-cysteine + ATP = L-cysteinyl-tRNA(Cys) + AMP + diphosphate</text>
        <dbReference type="Rhea" id="RHEA:17773"/>
        <dbReference type="Rhea" id="RHEA-COMP:9661"/>
        <dbReference type="Rhea" id="RHEA-COMP:9679"/>
        <dbReference type="ChEBI" id="CHEBI:30616"/>
        <dbReference type="ChEBI" id="CHEBI:33019"/>
        <dbReference type="ChEBI" id="CHEBI:35235"/>
        <dbReference type="ChEBI" id="CHEBI:78442"/>
        <dbReference type="ChEBI" id="CHEBI:78517"/>
        <dbReference type="ChEBI" id="CHEBI:456215"/>
        <dbReference type="EC" id="6.1.1.16"/>
    </reaction>
</comment>
<comment type="cofactor">
    <cofactor evidence="1">
        <name>Zn(2+)</name>
        <dbReference type="ChEBI" id="CHEBI:29105"/>
    </cofactor>
    <text evidence="1">Binds 1 zinc ion per subunit.</text>
</comment>
<comment type="subunit">
    <text evidence="1">Monomer.</text>
</comment>
<comment type="subcellular location">
    <subcellularLocation>
        <location evidence="1">Cytoplasm</location>
    </subcellularLocation>
</comment>
<comment type="similarity">
    <text evidence="1">Belongs to the class-I aminoacyl-tRNA synthetase family.</text>
</comment>
<dbReference type="EC" id="6.1.1.16" evidence="1"/>
<dbReference type="EMBL" id="AE015451">
    <property type="protein sequence ID" value="AAN68513.1"/>
    <property type="molecule type" value="Genomic_DNA"/>
</dbReference>
<dbReference type="RefSeq" id="NP_745049.1">
    <property type="nucleotide sequence ID" value="NC_002947.4"/>
</dbReference>
<dbReference type="RefSeq" id="WP_010953807.1">
    <property type="nucleotide sequence ID" value="NZ_CP169744.1"/>
</dbReference>
<dbReference type="SMR" id="Q88IU4"/>
<dbReference type="STRING" id="160488.PP_2905"/>
<dbReference type="PaxDb" id="160488-PP_2905"/>
<dbReference type="GeneID" id="83680512"/>
<dbReference type="KEGG" id="ppu:PP_2905"/>
<dbReference type="PATRIC" id="fig|160488.4.peg.3079"/>
<dbReference type="eggNOG" id="COG0215">
    <property type="taxonomic scope" value="Bacteria"/>
</dbReference>
<dbReference type="HOGENOM" id="CLU_013528_0_1_6"/>
<dbReference type="OrthoDB" id="9815130at2"/>
<dbReference type="PhylomeDB" id="Q88IU4"/>
<dbReference type="BioCyc" id="PPUT160488:G1G01-3084-MONOMER"/>
<dbReference type="Proteomes" id="UP000000556">
    <property type="component" value="Chromosome"/>
</dbReference>
<dbReference type="GO" id="GO:0005829">
    <property type="term" value="C:cytosol"/>
    <property type="evidence" value="ECO:0007669"/>
    <property type="project" value="TreeGrafter"/>
</dbReference>
<dbReference type="GO" id="GO:0005524">
    <property type="term" value="F:ATP binding"/>
    <property type="evidence" value="ECO:0007669"/>
    <property type="project" value="UniProtKB-UniRule"/>
</dbReference>
<dbReference type="GO" id="GO:0004817">
    <property type="term" value="F:cysteine-tRNA ligase activity"/>
    <property type="evidence" value="ECO:0007669"/>
    <property type="project" value="UniProtKB-UniRule"/>
</dbReference>
<dbReference type="GO" id="GO:0008270">
    <property type="term" value="F:zinc ion binding"/>
    <property type="evidence" value="ECO:0007669"/>
    <property type="project" value="UniProtKB-UniRule"/>
</dbReference>
<dbReference type="GO" id="GO:0006423">
    <property type="term" value="P:cysteinyl-tRNA aminoacylation"/>
    <property type="evidence" value="ECO:0007669"/>
    <property type="project" value="UniProtKB-UniRule"/>
</dbReference>
<dbReference type="CDD" id="cd07963">
    <property type="entry name" value="Anticodon_Ia_Cys"/>
    <property type="match status" value="1"/>
</dbReference>
<dbReference type="CDD" id="cd00672">
    <property type="entry name" value="CysRS_core"/>
    <property type="match status" value="1"/>
</dbReference>
<dbReference type="FunFam" id="3.40.50.620:FF:000009">
    <property type="entry name" value="Cysteine--tRNA ligase"/>
    <property type="match status" value="1"/>
</dbReference>
<dbReference type="Gene3D" id="1.20.120.1910">
    <property type="entry name" value="Cysteine-tRNA ligase, C-terminal anti-codon recognition domain"/>
    <property type="match status" value="1"/>
</dbReference>
<dbReference type="Gene3D" id="3.40.50.620">
    <property type="entry name" value="HUPs"/>
    <property type="match status" value="1"/>
</dbReference>
<dbReference type="HAMAP" id="MF_00041">
    <property type="entry name" value="Cys_tRNA_synth"/>
    <property type="match status" value="1"/>
</dbReference>
<dbReference type="InterPro" id="IPR015803">
    <property type="entry name" value="Cys-tRNA-ligase"/>
</dbReference>
<dbReference type="InterPro" id="IPR015273">
    <property type="entry name" value="Cys-tRNA-synt_Ia_DALR"/>
</dbReference>
<dbReference type="InterPro" id="IPR024909">
    <property type="entry name" value="Cys-tRNA/MSH_ligase"/>
</dbReference>
<dbReference type="InterPro" id="IPR056411">
    <property type="entry name" value="CysS_C"/>
</dbReference>
<dbReference type="InterPro" id="IPR014729">
    <property type="entry name" value="Rossmann-like_a/b/a_fold"/>
</dbReference>
<dbReference type="InterPro" id="IPR032678">
    <property type="entry name" value="tRNA-synt_1_cat_dom"/>
</dbReference>
<dbReference type="InterPro" id="IPR009080">
    <property type="entry name" value="tRNAsynth_Ia_anticodon-bd"/>
</dbReference>
<dbReference type="NCBIfam" id="TIGR00435">
    <property type="entry name" value="cysS"/>
    <property type="match status" value="1"/>
</dbReference>
<dbReference type="PANTHER" id="PTHR10890:SF3">
    <property type="entry name" value="CYSTEINE--TRNA LIGASE, CYTOPLASMIC"/>
    <property type="match status" value="1"/>
</dbReference>
<dbReference type="PANTHER" id="PTHR10890">
    <property type="entry name" value="CYSTEINYL-TRNA SYNTHETASE"/>
    <property type="match status" value="1"/>
</dbReference>
<dbReference type="Pfam" id="PF23493">
    <property type="entry name" value="CysS_C"/>
    <property type="match status" value="1"/>
</dbReference>
<dbReference type="Pfam" id="PF09190">
    <property type="entry name" value="DALR_2"/>
    <property type="match status" value="1"/>
</dbReference>
<dbReference type="Pfam" id="PF01406">
    <property type="entry name" value="tRNA-synt_1e"/>
    <property type="match status" value="1"/>
</dbReference>
<dbReference type="PRINTS" id="PR00983">
    <property type="entry name" value="TRNASYNTHCYS"/>
</dbReference>
<dbReference type="SMART" id="SM00840">
    <property type="entry name" value="DALR_2"/>
    <property type="match status" value="1"/>
</dbReference>
<dbReference type="SUPFAM" id="SSF47323">
    <property type="entry name" value="Anticodon-binding domain of a subclass of class I aminoacyl-tRNA synthetases"/>
    <property type="match status" value="1"/>
</dbReference>
<dbReference type="SUPFAM" id="SSF52374">
    <property type="entry name" value="Nucleotidylyl transferase"/>
    <property type="match status" value="1"/>
</dbReference>
<organism>
    <name type="scientific">Pseudomonas putida (strain ATCC 47054 / DSM 6125 / CFBP 8728 / NCIMB 11950 / KT2440)</name>
    <dbReference type="NCBI Taxonomy" id="160488"/>
    <lineage>
        <taxon>Bacteria</taxon>
        <taxon>Pseudomonadati</taxon>
        <taxon>Pseudomonadota</taxon>
        <taxon>Gammaproteobacteria</taxon>
        <taxon>Pseudomonadales</taxon>
        <taxon>Pseudomonadaceae</taxon>
        <taxon>Pseudomonas</taxon>
    </lineage>
</organism>
<sequence length="460" mass="51677">MLTIYNTLSKTKEVFKPLDGNKVRMYVCGMTVYDYCHLGHGRSMVAFDLVTRWLRKSGYELTYVRNITDIDDKIINRANENGETFDALTARMIDAMHEDERRLNILPPDQEPRATDHIAGMHAMIQTLIDKGYAYAPGNGDVYYRVGKFVGYGKLSRKRIEDLRIGARIEVDEAKQDPLDFVLWKGVKPGEPSWESPWGPGRPGWHIECSVMSTCCLGESFDIHGGGSDLEFPHHENEIAQSEAATGKQYANAWMHCGMIRINGEKMSKSLNNFFTIRDVLEKYHPEVVRYLLVASHYRSAINYSEDSLRDAKGALERFYHALRGLPRVAAKGGEAFVERFSVAMNDDFGTPEACAVLFDLVREINRLRDSDVEAAAGLAGRLRELGDVLGVLQLEADDFLRAGAEGKVDAAEVEGLIQARLKARADKNWAESDRIRDQLTAMGVVLEDSKGTTTWRLAD</sequence>